<feature type="chain" id="PRO_0000303596" description="tRNA N6-adenosine threonylcarbamoyltransferase">
    <location>
        <begin position="1"/>
        <end position="323"/>
    </location>
</feature>
<feature type="binding site" evidence="1">
    <location>
        <position position="110"/>
    </location>
    <ligand>
        <name>Fe cation</name>
        <dbReference type="ChEBI" id="CHEBI:24875"/>
    </ligand>
</feature>
<feature type="binding site" evidence="1">
    <location>
        <position position="114"/>
    </location>
    <ligand>
        <name>Fe cation</name>
        <dbReference type="ChEBI" id="CHEBI:24875"/>
    </ligand>
</feature>
<feature type="binding site" evidence="1">
    <location>
        <begin position="131"/>
        <end position="135"/>
    </location>
    <ligand>
        <name>substrate</name>
    </ligand>
</feature>
<feature type="binding site" evidence="1">
    <location>
        <position position="164"/>
    </location>
    <ligand>
        <name>substrate</name>
    </ligand>
</feature>
<feature type="binding site" evidence="1">
    <location>
        <position position="177"/>
    </location>
    <ligand>
        <name>substrate</name>
    </ligand>
</feature>
<feature type="binding site" evidence="1">
    <location>
        <position position="264"/>
    </location>
    <ligand>
        <name>substrate</name>
    </ligand>
</feature>
<feature type="binding site" evidence="1">
    <location>
        <position position="288"/>
    </location>
    <ligand>
        <name>Fe cation</name>
        <dbReference type="ChEBI" id="CHEBI:24875"/>
    </ligand>
</feature>
<reference key="1">
    <citation type="journal article" date="2004" name="Nat. Biotechnol.">
        <title>The genome sequence of the extreme thermophile Thermus thermophilus.</title>
        <authorList>
            <person name="Henne A."/>
            <person name="Brueggemann H."/>
            <person name="Raasch C."/>
            <person name="Wiezer A."/>
            <person name="Hartsch T."/>
            <person name="Liesegang H."/>
            <person name="Johann A."/>
            <person name="Lienard T."/>
            <person name="Gohl O."/>
            <person name="Martinez-Arias R."/>
            <person name="Jacobi C."/>
            <person name="Starkuviene V."/>
            <person name="Schlenczeck S."/>
            <person name="Dencker S."/>
            <person name="Huber R."/>
            <person name="Klenk H.-P."/>
            <person name="Kramer W."/>
            <person name="Merkl R."/>
            <person name="Gottschalk G."/>
            <person name="Fritz H.-J."/>
        </authorList>
    </citation>
    <scope>NUCLEOTIDE SEQUENCE [LARGE SCALE GENOMIC DNA]</scope>
    <source>
        <strain>ATCC BAA-163 / DSM 7039 / HB27</strain>
    </source>
</reference>
<sequence>MWVLGIDTSCDDTGVGLVRDGKVVVNLVASQVRLHEAFGGVVPELASREHLKALPLLVERALAEAGLRPKDLDLVAATRGPGLIGALLVGYTFAKGMAFALDRPFYAVHHLEGHIAAAWPEGLPPPFLALVASGGHTHLYEVLDLGRYRLLGATRDDAAGEAFDKVARLLGLGFPGGPEVERLAEEAEEAIPFPVPLRGQEGYDFSFSGLKTKALHLVEKGLPKAALAKGFQEAAIAHLAEVVLKAAKDTGHRVLLVAGGVAANRALQERFKEAGLEVHFPPRGLSQDNGAMIALAAWRRHQRGFPPSPLSLGATAYWPLEEA</sequence>
<protein>
    <recommendedName>
        <fullName evidence="1">tRNA N6-adenosine threonylcarbamoyltransferase</fullName>
        <ecNumber evidence="1">2.3.1.234</ecNumber>
    </recommendedName>
    <alternativeName>
        <fullName evidence="1">N6-L-threonylcarbamoyladenine synthase</fullName>
        <shortName evidence="1">t(6)A synthase</shortName>
    </alternativeName>
    <alternativeName>
        <fullName evidence="1">t(6)A37 threonylcarbamoyladenosine biosynthesis protein TsaD</fullName>
    </alternativeName>
    <alternativeName>
        <fullName evidence="1">tRNA threonylcarbamoyladenosine biosynthesis protein TsaD</fullName>
    </alternativeName>
</protein>
<dbReference type="EC" id="2.3.1.234" evidence="1"/>
<dbReference type="EMBL" id="AE017221">
    <property type="protein sequence ID" value="AAS81232.1"/>
    <property type="molecule type" value="Genomic_DNA"/>
</dbReference>
<dbReference type="RefSeq" id="WP_011173315.1">
    <property type="nucleotide sequence ID" value="NC_005835.1"/>
</dbReference>
<dbReference type="SMR" id="Q72J91"/>
<dbReference type="GeneID" id="3169345"/>
<dbReference type="KEGG" id="tth:TT_C0888"/>
<dbReference type="eggNOG" id="COG0533">
    <property type="taxonomic scope" value="Bacteria"/>
</dbReference>
<dbReference type="HOGENOM" id="CLU_023208_0_2_0"/>
<dbReference type="OrthoDB" id="9806197at2"/>
<dbReference type="Proteomes" id="UP000000592">
    <property type="component" value="Chromosome"/>
</dbReference>
<dbReference type="GO" id="GO:0005737">
    <property type="term" value="C:cytoplasm"/>
    <property type="evidence" value="ECO:0007669"/>
    <property type="project" value="UniProtKB-SubCell"/>
</dbReference>
<dbReference type="GO" id="GO:0005506">
    <property type="term" value="F:iron ion binding"/>
    <property type="evidence" value="ECO:0007669"/>
    <property type="project" value="UniProtKB-UniRule"/>
</dbReference>
<dbReference type="GO" id="GO:0061711">
    <property type="term" value="F:N(6)-L-threonylcarbamoyladenine synthase activity"/>
    <property type="evidence" value="ECO:0007669"/>
    <property type="project" value="UniProtKB-EC"/>
</dbReference>
<dbReference type="GO" id="GO:0002949">
    <property type="term" value="P:tRNA threonylcarbamoyladenosine modification"/>
    <property type="evidence" value="ECO:0007669"/>
    <property type="project" value="UniProtKB-UniRule"/>
</dbReference>
<dbReference type="CDD" id="cd24133">
    <property type="entry name" value="ASKHA_NBD_TsaD_bac"/>
    <property type="match status" value="1"/>
</dbReference>
<dbReference type="FunFam" id="3.30.420.40:FF:000012">
    <property type="entry name" value="tRNA N6-adenosine threonylcarbamoyltransferase"/>
    <property type="match status" value="1"/>
</dbReference>
<dbReference type="Gene3D" id="3.30.420.40">
    <property type="match status" value="2"/>
</dbReference>
<dbReference type="HAMAP" id="MF_01445">
    <property type="entry name" value="TsaD"/>
    <property type="match status" value="1"/>
</dbReference>
<dbReference type="InterPro" id="IPR043129">
    <property type="entry name" value="ATPase_NBD"/>
</dbReference>
<dbReference type="InterPro" id="IPR000905">
    <property type="entry name" value="Gcp-like_dom"/>
</dbReference>
<dbReference type="InterPro" id="IPR017861">
    <property type="entry name" value="KAE1/TsaD"/>
</dbReference>
<dbReference type="InterPro" id="IPR017860">
    <property type="entry name" value="Peptidase_M22_CS"/>
</dbReference>
<dbReference type="InterPro" id="IPR022450">
    <property type="entry name" value="TsaD"/>
</dbReference>
<dbReference type="NCBIfam" id="TIGR00329">
    <property type="entry name" value="gcp_kae1"/>
    <property type="match status" value="1"/>
</dbReference>
<dbReference type="NCBIfam" id="TIGR03723">
    <property type="entry name" value="T6A_TsaD_YgjD"/>
    <property type="match status" value="1"/>
</dbReference>
<dbReference type="PANTHER" id="PTHR11735">
    <property type="entry name" value="TRNA N6-ADENOSINE THREONYLCARBAMOYLTRANSFERASE"/>
    <property type="match status" value="1"/>
</dbReference>
<dbReference type="PANTHER" id="PTHR11735:SF6">
    <property type="entry name" value="TRNA N6-ADENOSINE THREONYLCARBAMOYLTRANSFERASE, MITOCHONDRIAL"/>
    <property type="match status" value="1"/>
</dbReference>
<dbReference type="Pfam" id="PF00814">
    <property type="entry name" value="TsaD"/>
    <property type="match status" value="1"/>
</dbReference>
<dbReference type="PRINTS" id="PR00789">
    <property type="entry name" value="OSIALOPTASE"/>
</dbReference>
<dbReference type="SUPFAM" id="SSF53067">
    <property type="entry name" value="Actin-like ATPase domain"/>
    <property type="match status" value="1"/>
</dbReference>
<dbReference type="PROSITE" id="PS01016">
    <property type="entry name" value="GLYCOPROTEASE"/>
    <property type="match status" value="1"/>
</dbReference>
<keyword id="KW-0012">Acyltransferase</keyword>
<keyword id="KW-0963">Cytoplasm</keyword>
<keyword id="KW-0408">Iron</keyword>
<keyword id="KW-0479">Metal-binding</keyword>
<keyword id="KW-0808">Transferase</keyword>
<keyword id="KW-0819">tRNA processing</keyword>
<accession>Q72J91</accession>
<proteinExistence type="inferred from homology"/>
<comment type="function">
    <text evidence="1">Required for the formation of a threonylcarbamoyl group on adenosine at position 37 (t(6)A37) in tRNAs that read codons beginning with adenine. Is involved in the transfer of the threonylcarbamoyl moiety of threonylcarbamoyl-AMP (TC-AMP) to the N6 group of A37, together with TsaE and TsaB. TsaD likely plays a direct catalytic role in this reaction.</text>
</comment>
<comment type="catalytic activity">
    <reaction evidence="1">
        <text>L-threonylcarbamoyladenylate + adenosine(37) in tRNA = N(6)-L-threonylcarbamoyladenosine(37) in tRNA + AMP + H(+)</text>
        <dbReference type="Rhea" id="RHEA:37059"/>
        <dbReference type="Rhea" id="RHEA-COMP:10162"/>
        <dbReference type="Rhea" id="RHEA-COMP:10163"/>
        <dbReference type="ChEBI" id="CHEBI:15378"/>
        <dbReference type="ChEBI" id="CHEBI:73682"/>
        <dbReference type="ChEBI" id="CHEBI:74411"/>
        <dbReference type="ChEBI" id="CHEBI:74418"/>
        <dbReference type="ChEBI" id="CHEBI:456215"/>
        <dbReference type="EC" id="2.3.1.234"/>
    </reaction>
</comment>
<comment type="cofactor">
    <cofactor evidence="1">
        <name>Fe(2+)</name>
        <dbReference type="ChEBI" id="CHEBI:29033"/>
    </cofactor>
    <text evidence="1">Binds 1 Fe(2+) ion per subunit.</text>
</comment>
<comment type="subcellular location">
    <subcellularLocation>
        <location evidence="1">Cytoplasm</location>
    </subcellularLocation>
</comment>
<comment type="similarity">
    <text evidence="1">Belongs to the KAE1 / TsaD family.</text>
</comment>
<gene>
    <name evidence="1" type="primary">tsaD</name>
    <name type="synonym">gcp</name>
    <name type="ordered locus">TT_C0888</name>
</gene>
<evidence type="ECO:0000255" key="1">
    <source>
        <dbReference type="HAMAP-Rule" id="MF_01445"/>
    </source>
</evidence>
<name>TSAD_THET2</name>
<organism>
    <name type="scientific">Thermus thermophilus (strain ATCC BAA-163 / DSM 7039 / HB27)</name>
    <dbReference type="NCBI Taxonomy" id="262724"/>
    <lineage>
        <taxon>Bacteria</taxon>
        <taxon>Thermotogati</taxon>
        <taxon>Deinococcota</taxon>
        <taxon>Deinococci</taxon>
        <taxon>Thermales</taxon>
        <taxon>Thermaceae</taxon>
        <taxon>Thermus</taxon>
    </lineage>
</organism>